<feature type="chain" id="PRO_0000157059" description="Thiamine-phosphate synthase">
    <location>
        <begin position="1"/>
        <end position="214"/>
    </location>
</feature>
<feature type="binding site" evidence="1">
    <location>
        <begin position="38"/>
        <end position="42"/>
    </location>
    <ligand>
        <name>4-amino-2-methyl-5-(diphosphooxymethyl)pyrimidine</name>
        <dbReference type="ChEBI" id="CHEBI:57841"/>
    </ligand>
</feature>
<feature type="binding site" evidence="1">
    <location>
        <position position="70"/>
    </location>
    <ligand>
        <name>4-amino-2-methyl-5-(diphosphooxymethyl)pyrimidine</name>
        <dbReference type="ChEBI" id="CHEBI:57841"/>
    </ligand>
</feature>
<feature type="binding site" evidence="1">
    <location>
        <position position="71"/>
    </location>
    <ligand>
        <name>Mg(2+)</name>
        <dbReference type="ChEBI" id="CHEBI:18420"/>
    </ligand>
</feature>
<feature type="binding site" evidence="1">
    <location>
        <position position="90"/>
    </location>
    <ligand>
        <name>Mg(2+)</name>
        <dbReference type="ChEBI" id="CHEBI:18420"/>
    </ligand>
</feature>
<feature type="binding site" evidence="1">
    <location>
        <position position="109"/>
    </location>
    <ligand>
        <name>4-amino-2-methyl-5-(diphosphooxymethyl)pyrimidine</name>
        <dbReference type="ChEBI" id="CHEBI:57841"/>
    </ligand>
</feature>
<feature type="binding site" evidence="1">
    <location>
        <position position="138"/>
    </location>
    <ligand>
        <name>4-amino-2-methyl-5-(diphosphooxymethyl)pyrimidine</name>
        <dbReference type="ChEBI" id="CHEBI:57841"/>
    </ligand>
</feature>
<feature type="binding site" evidence="1">
    <location>
        <position position="165"/>
    </location>
    <ligand>
        <name>2-[(2R,5Z)-2-carboxy-4-methylthiazol-5(2H)-ylidene]ethyl phosphate</name>
        <dbReference type="ChEBI" id="CHEBI:62899"/>
    </ligand>
</feature>
<organism>
    <name type="scientific">Caldanaerobacter subterraneus subsp. tengcongensis (strain DSM 15242 / JCM 11007 / NBRC 100824 / MB4)</name>
    <name type="common">Thermoanaerobacter tengcongensis</name>
    <dbReference type="NCBI Taxonomy" id="273068"/>
    <lineage>
        <taxon>Bacteria</taxon>
        <taxon>Bacillati</taxon>
        <taxon>Bacillota</taxon>
        <taxon>Clostridia</taxon>
        <taxon>Thermoanaerobacterales</taxon>
        <taxon>Thermoanaerobacteraceae</taxon>
        <taxon>Caldanaerobacter</taxon>
    </lineage>
</organism>
<sequence length="214" mass="23218">MKRIDFTLYAITDRSFIKGMDIAEAVEIAIKNGVTVVQLREKDISSREFYEIALKVKEVTRKYNVPLIINDRVDIALAVDAEGVHVGPDDLPVGVVRRILGPDKIVGGSAYSVEEALKAEKEGADYIGAGSVFAQPVKPEAEVIGIEGVRKIKEAVNIPVVAIGGVNKTNAYEVILHSGVDGISAIAGIFDGDIEANTKDMLREIRRAFKERGK</sequence>
<keyword id="KW-0460">Magnesium</keyword>
<keyword id="KW-0479">Metal-binding</keyword>
<keyword id="KW-1185">Reference proteome</keyword>
<keyword id="KW-0784">Thiamine biosynthesis</keyword>
<keyword id="KW-0808">Transferase</keyword>
<gene>
    <name evidence="1" type="primary">thiE</name>
    <name type="ordered locus">TTE2233</name>
</gene>
<reference key="1">
    <citation type="journal article" date="2002" name="Genome Res.">
        <title>A complete sequence of the T. tengcongensis genome.</title>
        <authorList>
            <person name="Bao Q."/>
            <person name="Tian Y."/>
            <person name="Li W."/>
            <person name="Xu Z."/>
            <person name="Xuan Z."/>
            <person name="Hu S."/>
            <person name="Dong W."/>
            <person name="Yang J."/>
            <person name="Chen Y."/>
            <person name="Xue Y."/>
            <person name="Xu Y."/>
            <person name="Lai X."/>
            <person name="Huang L."/>
            <person name="Dong X."/>
            <person name="Ma Y."/>
            <person name="Ling L."/>
            <person name="Tan H."/>
            <person name="Chen R."/>
            <person name="Wang J."/>
            <person name="Yu J."/>
            <person name="Yang H."/>
        </authorList>
    </citation>
    <scope>NUCLEOTIDE SEQUENCE [LARGE SCALE GENOMIC DNA]</scope>
    <source>
        <strain>DSM 15242 / JCM 11007 / NBRC 100824 / MB4</strain>
    </source>
</reference>
<evidence type="ECO:0000255" key="1">
    <source>
        <dbReference type="HAMAP-Rule" id="MF_00097"/>
    </source>
</evidence>
<evidence type="ECO:0000305" key="2"/>
<accession>Q8R806</accession>
<comment type="function">
    <text evidence="1">Condenses 4-methyl-5-(beta-hydroxyethyl)thiazole monophosphate (THZ-P) and 2-methyl-4-amino-5-hydroxymethyl pyrimidine pyrophosphate (HMP-PP) to form thiamine monophosphate (TMP).</text>
</comment>
<comment type="catalytic activity">
    <reaction evidence="1">
        <text>2-[(2R,5Z)-2-carboxy-4-methylthiazol-5(2H)-ylidene]ethyl phosphate + 4-amino-2-methyl-5-(diphosphooxymethyl)pyrimidine + 2 H(+) = thiamine phosphate + CO2 + diphosphate</text>
        <dbReference type="Rhea" id="RHEA:47844"/>
        <dbReference type="ChEBI" id="CHEBI:15378"/>
        <dbReference type="ChEBI" id="CHEBI:16526"/>
        <dbReference type="ChEBI" id="CHEBI:33019"/>
        <dbReference type="ChEBI" id="CHEBI:37575"/>
        <dbReference type="ChEBI" id="CHEBI:57841"/>
        <dbReference type="ChEBI" id="CHEBI:62899"/>
        <dbReference type="EC" id="2.5.1.3"/>
    </reaction>
</comment>
<comment type="catalytic activity">
    <reaction evidence="1">
        <text>2-(2-carboxy-4-methylthiazol-5-yl)ethyl phosphate + 4-amino-2-methyl-5-(diphosphooxymethyl)pyrimidine + 2 H(+) = thiamine phosphate + CO2 + diphosphate</text>
        <dbReference type="Rhea" id="RHEA:47848"/>
        <dbReference type="ChEBI" id="CHEBI:15378"/>
        <dbReference type="ChEBI" id="CHEBI:16526"/>
        <dbReference type="ChEBI" id="CHEBI:33019"/>
        <dbReference type="ChEBI" id="CHEBI:37575"/>
        <dbReference type="ChEBI" id="CHEBI:57841"/>
        <dbReference type="ChEBI" id="CHEBI:62890"/>
        <dbReference type="EC" id="2.5.1.3"/>
    </reaction>
</comment>
<comment type="catalytic activity">
    <reaction evidence="1">
        <text>4-methyl-5-(2-phosphooxyethyl)-thiazole + 4-amino-2-methyl-5-(diphosphooxymethyl)pyrimidine + H(+) = thiamine phosphate + diphosphate</text>
        <dbReference type="Rhea" id="RHEA:22328"/>
        <dbReference type="ChEBI" id="CHEBI:15378"/>
        <dbReference type="ChEBI" id="CHEBI:33019"/>
        <dbReference type="ChEBI" id="CHEBI:37575"/>
        <dbReference type="ChEBI" id="CHEBI:57841"/>
        <dbReference type="ChEBI" id="CHEBI:58296"/>
        <dbReference type="EC" id="2.5.1.3"/>
    </reaction>
</comment>
<comment type="cofactor">
    <cofactor evidence="1">
        <name>Mg(2+)</name>
        <dbReference type="ChEBI" id="CHEBI:18420"/>
    </cofactor>
    <text evidence="1">Binds 1 Mg(2+) ion per subunit.</text>
</comment>
<comment type="pathway">
    <text evidence="1">Cofactor biosynthesis; thiamine diphosphate biosynthesis; thiamine phosphate from 4-amino-2-methyl-5-diphosphomethylpyrimidine and 4-methyl-5-(2-phosphoethyl)-thiazole: step 1/1.</text>
</comment>
<comment type="similarity">
    <text evidence="1">Belongs to the thiamine-phosphate synthase family.</text>
</comment>
<comment type="sequence caution" evidence="2">
    <conflict type="erroneous initiation">
        <sequence resource="EMBL-CDS" id="AAM25383"/>
    </conflict>
</comment>
<proteinExistence type="inferred from homology"/>
<protein>
    <recommendedName>
        <fullName evidence="1">Thiamine-phosphate synthase</fullName>
        <shortName evidence="1">TP synthase</shortName>
        <shortName evidence="1">TPS</shortName>
        <ecNumber evidence="1">2.5.1.3</ecNumber>
    </recommendedName>
    <alternativeName>
        <fullName evidence="1">Thiamine-phosphate pyrophosphorylase</fullName>
        <shortName evidence="1">TMP pyrophosphorylase</shortName>
        <shortName evidence="1">TMP-PPase</shortName>
    </alternativeName>
</protein>
<dbReference type="EC" id="2.5.1.3" evidence="1"/>
<dbReference type="EMBL" id="AE008691">
    <property type="protein sequence ID" value="AAM25383.1"/>
    <property type="status" value="ALT_INIT"/>
    <property type="molecule type" value="Genomic_DNA"/>
</dbReference>
<dbReference type="SMR" id="Q8R806"/>
<dbReference type="STRING" id="273068.TTE2233"/>
<dbReference type="KEGG" id="tte:TTE2233"/>
<dbReference type="eggNOG" id="COG0352">
    <property type="taxonomic scope" value="Bacteria"/>
</dbReference>
<dbReference type="HOGENOM" id="CLU_018272_3_2_9"/>
<dbReference type="UniPathway" id="UPA00060">
    <property type="reaction ID" value="UER00141"/>
</dbReference>
<dbReference type="Proteomes" id="UP000000555">
    <property type="component" value="Chromosome"/>
</dbReference>
<dbReference type="GO" id="GO:0005737">
    <property type="term" value="C:cytoplasm"/>
    <property type="evidence" value="ECO:0007669"/>
    <property type="project" value="TreeGrafter"/>
</dbReference>
<dbReference type="GO" id="GO:0000287">
    <property type="term" value="F:magnesium ion binding"/>
    <property type="evidence" value="ECO:0007669"/>
    <property type="project" value="UniProtKB-UniRule"/>
</dbReference>
<dbReference type="GO" id="GO:0004789">
    <property type="term" value="F:thiamine-phosphate diphosphorylase activity"/>
    <property type="evidence" value="ECO:0007669"/>
    <property type="project" value="UniProtKB-UniRule"/>
</dbReference>
<dbReference type="GO" id="GO:0009228">
    <property type="term" value="P:thiamine biosynthetic process"/>
    <property type="evidence" value="ECO:0007669"/>
    <property type="project" value="UniProtKB-KW"/>
</dbReference>
<dbReference type="GO" id="GO:0009229">
    <property type="term" value="P:thiamine diphosphate biosynthetic process"/>
    <property type="evidence" value="ECO:0007669"/>
    <property type="project" value="UniProtKB-UniRule"/>
</dbReference>
<dbReference type="CDD" id="cd00564">
    <property type="entry name" value="TMP_TenI"/>
    <property type="match status" value="1"/>
</dbReference>
<dbReference type="FunFam" id="3.20.20.70:FF:000096">
    <property type="entry name" value="Thiamine-phosphate synthase"/>
    <property type="match status" value="1"/>
</dbReference>
<dbReference type="Gene3D" id="3.20.20.70">
    <property type="entry name" value="Aldolase class I"/>
    <property type="match status" value="1"/>
</dbReference>
<dbReference type="HAMAP" id="MF_00097">
    <property type="entry name" value="TMP_synthase"/>
    <property type="match status" value="1"/>
</dbReference>
<dbReference type="InterPro" id="IPR013785">
    <property type="entry name" value="Aldolase_TIM"/>
</dbReference>
<dbReference type="InterPro" id="IPR036206">
    <property type="entry name" value="ThiamineP_synth_sf"/>
</dbReference>
<dbReference type="InterPro" id="IPR022998">
    <property type="entry name" value="ThiamineP_synth_TenI"/>
</dbReference>
<dbReference type="InterPro" id="IPR034291">
    <property type="entry name" value="TMP_synthase"/>
</dbReference>
<dbReference type="NCBIfam" id="TIGR00693">
    <property type="entry name" value="thiE"/>
    <property type="match status" value="1"/>
</dbReference>
<dbReference type="PANTHER" id="PTHR20857:SF23">
    <property type="entry name" value="THIAMINE BIOSYNTHETIC BIFUNCTIONAL ENZYME"/>
    <property type="match status" value="1"/>
</dbReference>
<dbReference type="PANTHER" id="PTHR20857">
    <property type="entry name" value="THIAMINE-PHOSPHATE PYROPHOSPHORYLASE"/>
    <property type="match status" value="1"/>
</dbReference>
<dbReference type="Pfam" id="PF02581">
    <property type="entry name" value="TMP-TENI"/>
    <property type="match status" value="1"/>
</dbReference>
<dbReference type="SUPFAM" id="SSF51391">
    <property type="entry name" value="Thiamin phosphate synthase"/>
    <property type="match status" value="1"/>
</dbReference>
<name>THIE_CALS4</name>